<sequence>MYTKDTIVAIATPQGNGGIGIIRISGIDALEIAEKLTKKQLKPRYATFCNVYNDNEIIDHGIVIFFKAPLSYTGEDVVEIQAHGNPFILNLIIKAALNCGARMAKAGEFTERAFLNNKLDLAQAEAVADIINASSEIAAKSAAKSLQGDFSKEINNLLEKLIYLRMYVEASIDFPEEEINFLEDQKIHSSLEEIYKVILAIKNSCKQGVILAEGITLILVGKPNAGKSSLLNALAGKESAIVTSIAGTTRDIVKEHIQINGVPMHIIDTAGLRNSDDIIESEGIKRAIKKIQEADQVLFVTDDYTNSQVKFSDIKEIIPEFYDQIPKDIDITYVHNKIDLLKEVPHNHANHIYISAENNIGIDKLKEHILNKVGYTNQNESIYTARERHVTAINNAFEHIKLAKEQLELGNGELLAEELLIVQEYLNSITGEFSSDDLLGEIFSSFCIGK</sequence>
<organism>
    <name type="scientific">Francisella tularensis subsp. holarctica (strain LVS)</name>
    <dbReference type="NCBI Taxonomy" id="376619"/>
    <lineage>
        <taxon>Bacteria</taxon>
        <taxon>Pseudomonadati</taxon>
        <taxon>Pseudomonadota</taxon>
        <taxon>Gammaproteobacteria</taxon>
        <taxon>Thiotrichales</taxon>
        <taxon>Francisellaceae</taxon>
        <taxon>Francisella</taxon>
    </lineage>
</organism>
<evidence type="ECO:0000255" key="1">
    <source>
        <dbReference type="HAMAP-Rule" id="MF_00379"/>
    </source>
</evidence>
<accession>Q2A342</accession>
<proteinExistence type="inferred from homology"/>
<name>MNME_FRATH</name>
<gene>
    <name evidence="1" type="primary">mnmE</name>
    <name evidence="1" type="synonym">trmE</name>
    <name type="ordered locus">FTL_1177</name>
</gene>
<protein>
    <recommendedName>
        <fullName evidence="1">tRNA modification GTPase MnmE</fullName>
        <ecNumber evidence="1">3.6.-.-</ecNumber>
    </recommendedName>
</protein>
<dbReference type="EC" id="3.6.-.-" evidence="1"/>
<dbReference type="EMBL" id="AM233362">
    <property type="protein sequence ID" value="CAJ79616.1"/>
    <property type="molecule type" value="Genomic_DNA"/>
</dbReference>
<dbReference type="RefSeq" id="WP_011457460.1">
    <property type="nucleotide sequence ID" value="NZ_CP009694.1"/>
</dbReference>
<dbReference type="SMR" id="Q2A342"/>
<dbReference type="KEGG" id="ftl:FTL_1177"/>
<dbReference type="Proteomes" id="UP000001944">
    <property type="component" value="Chromosome"/>
</dbReference>
<dbReference type="GO" id="GO:0005829">
    <property type="term" value="C:cytosol"/>
    <property type="evidence" value="ECO:0007669"/>
    <property type="project" value="TreeGrafter"/>
</dbReference>
<dbReference type="GO" id="GO:0005525">
    <property type="term" value="F:GTP binding"/>
    <property type="evidence" value="ECO:0007669"/>
    <property type="project" value="UniProtKB-UniRule"/>
</dbReference>
<dbReference type="GO" id="GO:0003924">
    <property type="term" value="F:GTPase activity"/>
    <property type="evidence" value="ECO:0007669"/>
    <property type="project" value="UniProtKB-UniRule"/>
</dbReference>
<dbReference type="GO" id="GO:0046872">
    <property type="term" value="F:metal ion binding"/>
    <property type="evidence" value="ECO:0007669"/>
    <property type="project" value="UniProtKB-KW"/>
</dbReference>
<dbReference type="GO" id="GO:0030488">
    <property type="term" value="P:tRNA methylation"/>
    <property type="evidence" value="ECO:0007669"/>
    <property type="project" value="TreeGrafter"/>
</dbReference>
<dbReference type="GO" id="GO:0002098">
    <property type="term" value="P:tRNA wobble uridine modification"/>
    <property type="evidence" value="ECO:0007669"/>
    <property type="project" value="TreeGrafter"/>
</dbReference>
<dbReference type="CDD" id="cd04164">
    <property type="entry name" value="trmE"/>
    <property type="match status" value="1"/>
</dbReference>
<dbReference type="CDD" id="cd14858">
    <property type="entry name" value="TrmE_N"/>
    <property type="match status" value="1"/>
</dbReference>
<dbReference type="Gene3D" id="3.40.50.300">
    <property type="entry name" value="P-loop containing nucleotide triphosphate hydrolases"/>
    <property type="match status" value="1"/>
</dbReference>
<dbReference type="Gene3D" id="3.30.1360.120">
    <property type="entry name" value="Probable tRNA modification gtpase trme, domain 1"/>
    <property type="match status" value="1"/>
</dbReference>
<dbReference type="Gene3D" id="1.20.120.430">
    <property type="entry name" value="tRNA modification GTPase MnmE domain 2"/>
    <property type="match status" value="1"/>
</dbReference>
<dbReference type="HAMAP" id="MF_00379">
    <property type="entry name" value="GTPase_MnmE"/>
    <property type="match status" value="1"/>
</dbReference>
<dbReference type="InterPro" id="IPR031168">
    <property type="entry name" value="G_TrmE"/>
</dbReference>
<dbReference type="InterPro" id="IPR006073">
    <property type="entry name" value="GTP-bd"/>
</dbReference>
<dbReference type="InterPro" id="IPR018948">
    <property type="entry name" value="GTP-bd_TrmE_N"/>
</dbReference>
<dbReference type="InterPro" id="IPR004520">
    <property type="entry name" value="GTPase_MnmE"/>
</dbReference>
<dbReference type="InterPro" id="IPR027368">
    <property type="entry name" value="MnmE_dom2"/>
</dbReference>
<dbReference type="InterPro" id="IPR025867">
    <property type="entry name" value="MnmE_helical"/>
</dbReference>
<dbReference type="InterPro" id="IPR027417">
    <property type="entry name" value="P-loop_NTPase"/>
</dbReference>
<dbReference type="InterPro" id="IPR005225">
    <property type="entry name" value="Small_GTP-bd"/>
</dbReference>
<dbReference type="InterPro" id="IPR027266">
    <property type="entry name" value="TrmE/GcvT_dom1"/>
</dbReference>
<dbReference type="NCBIfam" id="TIGR00450">
    <property type="entry name" value="mnmE_trmE_thdF"/>
    <property type="match status" value="1"/>
</dbReference>
<dbReference type="NCBIfam" id="NF003661">
    <property type="entry name" value="PRK05291.1-3"/>
    <property type="match status" value="1"/>
</dbReference>
<dbReference type="NCBIfam" id="TIGR00231">
    <property type="entry name" value="small_GTP"/>
    <property type="match status" value="1"/>
</dbReference>
<dbReference type="PANTHER" id="PTHR42714">
    <property type="entry name" value="TRNA MODIFICATION GTPASE GTPBP3"/>
    <property type="match status" value="1"/>
</dbReference>
<dbReference type="PANTHER" id="PTHR42714:SF2">
    <property type="entry name" value="TRNA MODIFICATION GTPASE GTPBP3, MITOCHONDRIAL"/>
    <property type="match status" value="1"/>
</dbReference>
<dbReference type="Pfam" id="PF01926">
    <property type="entry name" value="MMR_HSR1"/>
    <property type="match status" value="1"/>
</dbReference>
<dbReference type="Pfam" id="PF12631">
    <property type="entry name" value="MnmE_helical"/>
    <property type="match status" value="1"/>
</dbReference>
<dbReference type="Pfam" id="PF10396">
    <property type="entry name" value="TrmE_N"/>
    <property type="match status" value="1"/>
</dbReference>
<dbReference type="PRINTS" id="PR00326">
    <property type="entry name" value="GTP1OBG"/>
</dbReference>
<dbReference type="SUPFAM" id="SSF52540">
    <property type="entry name" value="P-loop containing nucleoside triphosphate hydrolases"/>
    <property type="match status" value="1"/>
</dbReference>
<dbReference type="SUPFAM" id="SSF116878">
    <property type="entry name" value="TrmE connector domain"/>
    <property type="match status" value="1"/>
</dbReference>
<dbReference type="PROSITE" id="PS51709">
    <property type="entry name" value="G_TRME"/>
    <property type="match status" value="1"/>
</dbReference>
<comment type="function">
    <text evidence="1">Exhibits a very high intrinsic GTPase hydrolysis rate. Involved in the addition of a carboxymethylaminomethyl (cmnm) group at the wobble position (U34) of certain tRNAs, forming tRNA-cmnm(5)s(2)U34.</text>
</comment>
<comment type="cofactor">
    <cofactor evidence="1">
        <name>K(+)</name>
        <dbReference type="ChEBI" id="CHEBI:29103"/>
    </cofactor>
    <text evidence="1">Binds 1 potassium ion per subunit.</text>
</comment>
<comment type="subunit">
    <text evidence="1">Homodimer. Heterotetramer of two MnmE and two MnmG subunits.</text>
</comment>
<comment type="subcellular location">
    <subcellularLocation>
        <location evidence="1">Cytoplasm</location>
    </subcellularLocation>
</comment>
<comment type="similarity">
    <text evidence="1">Belongs to the TRAFAC class TrmE-Era-EngA-EngB-Septin-like GTPase superfamily. TrmE GTPase family.</text>
</comment>
<reference key="1">
    <citation type="submission" date="2006-03" db="EMBL/GenBank/DDBJ databases">
        <title>Complete genome sequence of Francisella tularensis LVS (Live Vaccine Strain).</title>
        <authorList>
            <person name="Chain P."/>
            <person name="Larimer F."/>
            <person name="Land M."/>
            <person name="Stilwagen S."/>
            <person name="Larsson P."/>
            <person name="Bearden S."/>
            <person name="Chu M."/>
            <person name="Oyston P."/>
            <person name="Forsman M."/>
            <person name="Andersson S."/>
            <person name="Lindler L."/>
            <person name="Titball R."/>
            <person name="Garcia E."/>
        </authorList>
    </citation>
    <scope>NUCLEOTIDE SEQUENCE [LARGE SCALE GENOMIC DNA]</scope>
    <source>
        <strain>LVS</strain>
    </source>
</reference>
<feature type="chain" id="PRO_1000060042" description="tRNA modification GTPase MnmE">
    <location>
        <begin position="1"/>
        <end position="450"/>
    </location>
</feature>
<feature type="domain" description="TrmE-type G">
    <location>
        <begin position="214"/>
        <end position="374"/>
    </location>
</feature>
<feature type="binding site" evidence="1">
    <location>
        <position position="23"/>
    </location>
    <ligand>
        <name>(6S)-5-formyl-5,6,7,8-tetrahydrofolate</name>
        <dbReference type="ChEBI" id="CHEBI:57457"/>
    </ligand>
</feature>
<feature type="binding site" evidence="1">
    <location>
        <position position="79"/>
    </location>
    <ligand>
        <name>(6S)-5-formyl-5,6,7,8-tetrahydrofolate</name>
        <dbReference type="ChEBI" id="CHEBI:57457"/>
    </ligand>
</feature>
<feature type="binding site" evidence="1">
    <location>
        <position position="118"/>
    </location>
    <ligand>
        <name>(6S)-5-formyl-5,6,7,8-tetrahydrofolate</name>
        <dbReference type="ChEBI" id="CHEBI:57457"/>
    </ligand>
</feature>
<feature type="binding site" evidence="1">
    <location>
        <begin position="224"/>
        <end position="229"/>
    </location>
    <ligand>
        <name>GTP</name>
        <dbReference type="ChEBI" id="CHEBI:37565"/>
    </ligand>
</feature>
<feature type="binding site" evidence="1">
    <location>
        <position position="224"/>
    </location>
    <ligand>
        <name>K(+)</name>
        <dbReference type="ChEBI" id="CHEBI:29103"/>
    </ligand>
</feature>
<feature type="binding site" evidence="1">
    <location>
        <position position="228"/>
    </location>
    <ligand>
        <name>Mg(2+)</name>
        <dbReference type="ChEBI" id="CHEBI:18420"/>
    </ligand>
</feature>
<feature type="binding site" evidence="1">
    <location>
        <begin position="243"/>
        <end position="249"/>
    </location>
    <ligand>
        <name>GTP</name>
        <dbReference type="ChEBI" id="CHEBI:37565"/>
    </ligand>
</feature>
<feature type="binding site" evidence="1">
    <location>
        <position position="243"/>
    </location>
    <ligand>
        <name>K(+)</name>
        <dbReference type="ChEBI" id="CHEBI:29103"/>
    </ligand>
</feature>
<feature type="binding site" evidence="1">
    <location>
        <position position="245"/>
    </location>
    <ligand>
        <name>K(+)</name>
        <dbReference type="ChEBI" id="CHEBI:29103"/>
    </ligand>
</feature>
<feature type="binding site" evidence="1">
    <location>
        <position position="248"/>
    </location>
    <ligand>
        <name>K(+)</name>
        <dbReference type="ChEBI" id="CHEBI:29103"/>
    </ligand>
</feature>
<feature type="binding site" evidence="1">
    <location>
        <position position="249"/>
    </location>
    <ligand>
        <name>Mg(2+)</name>
        <dbReference type="ChEBI" id="CHEBI:18420"/>
    </ligand>
</feature>
<feature type="binding site" evidence="1">
    <location>
        <begin position="268"/>
        <end position="271"/>
    </location>
    <ligand>
        <name>GTP</name>
        <dbReference type="ChEBI" id="CHEBI:37565"/>
    </ligand>
</feature>
<feature type="binding site" evidence="1">
    <location>
        <position position="450"/>
    </location>
    <ligand>
        <name>(6S)-5-formyl-5,6,7,8-tetrahydrofolate</name>
        <dbReference type="ChEBI" id="CHEBI:57457"/>
    </ligand>
</feature>
<keyword id="KW-0963">Cytoplasm</keyword>
<keyword id="KW-0342">GTP-binding</keyword>
<keyword id="KW-0378">Hydrolase</keyword>
<keyword id="KW-0460">Magnesium</keyword>
<keyword id="KW-0479">Metal-binding</keyword>
<keyword id="KW-0547">Nucleotide-binding</keyword>
<keyword id="KW-0630">Potassium</keyword>
<keyword id="KW-1185">Reference proteome</keyword>
<keyword id="KW-0819">tRNA processing</keyword>